<protein>
    <recommendedName>
        <fullName evidence="1">Glutamyl-tRNA(Gln) amidotransferase subunit A</fullName>
        <shortName evidence="1">Glu-ADT subunit A</shortName>
        <ecNumber evidence="1">6.3.5.7</ecNumber>
    </recommendedName>
</protein>
<comment type="function">
    <text evidence="1">Allows the formation of correctly charged Gln-tRNA(Gln) through the transamidation of misacylated Glu-tRNA(Gln) in organisms which lack glutaminyl-tRNA synthetase. The reaction takes place in the presence of glutamine and ATP through an activated gamma-phospho-Glu-tRNA(Gln).</text>
</comment>
<comment type="catalytic activity">
    <reaction evidence="1">
        <text>L-glutamyl-tRNA(Gln) + L-glutamine + ATP + H2O = L-glutaminyl-tRNA(Gln) + L-glutamate + ADP + phosphate + H(+)</text>
        <dbReference type="Rhea" id="RHEA:17521"/>
        <dbReference type="Rhea" id="RHEA-COMP:9681"/>
        <dbReference type="Rhea" id="RHEA-COMP:9684"/>
        <dbReference type="ChEBI" id="CHEBI:15377"/>
        <dbReference type="ChEBI" id="CHEBI:15378"/>
        <dbReference type="ChEBI" id="CHEBI:29985"/>
        <dbReference type="ChEBI" id="CHEBI:30616"/>
        <dbReference type="ChEBI" id="CHEBI:43474"/>
        <dbReference type="ChEBI" id="CHEBI:58359"/>
        <dbReference type="ChEBI" id="CHEBI:78520"/>
        <dbReference type="ChEBI" id="CHEBI:78521"/>
        <dbReference type="ChEBI" id="CHEBI:456216"/>
        <dbReference type="EC" id="6.3.5.7"/>
    </reaction>
</comment>
<comment type="subunit">
    <text evidence="1">Heterotrimer of A, B and C subunits.</text>
</comment>
<comment type="similarity">
    <text evidence="1">Belongs to the amidase family. GatA subfamily.</text>
</comment>
<proteinExistence type="inferred from homology"/>
<organism>
    <name type="scientific">Neisseria meningitidis serogroup B (strain ATCC BAA-335 / MC58)</name>
    <dbReference type="NCBI Taxonomy" id="122586"/>
    <lineage>
        <taxon>Bacteria</taxon>
        <taxon>Pseudomonadati</taxon>
        <taxon>Pseudomonadota</taxon>
        <taxon>Betaproteobacteria</taxon>
        <taxon>Neisseriales</taxon>
        <taxon>Neisseriaceae</taxon>
        <taxon>Neisseria</taxon>
    </lineage>
</organism>
<dbReference type="EC" id="6.3.5.7" evidence="1"/>
<dbReference type="EMBL" id="AE002098">
    <property type="protein sequence ID" value="AAF41730.1"/>
    <property type="molecule type" value="Genomic_DNA"/>
</dbReference>
<dbReference type="PIR" id="E81091">
    <property type="entry name" value="E81091"/>
</dbReference>
<dbReference type="RefSeq" id="NP_274374.1">
    <property type="nucleotide sequence ID" value="NC_003112.2"/>
</dbReference>
<dbReference type="RefSeq" id="WP_002225150.1">
    <property type="nucleotide sequence ID" value="NC_003112.2"/>
</dbReference>
<dbReference type="SMR" id="Q9JYZ9"/>
<dbReference type="STRING" id="122586.NMB1356"/>
<dbReference type="PaxDb" id="122586-NMB1356"/>
<dbReference type="KEGG" id="nme:NMB1356"/>
<dbReference type="PATRIC" id="fig|122586.8.peg.1696"/>
<dbReference type="HOGENOM" id="CLU_009600_0_3_4"/>
<dbReference type="InParanoid" id="Q9JYZ9"/>
<dbReference type="OrthoDB" id="9811471at2"/>
<dbReference type="Proteomes" id="UP000000425">
    <property type="component" value="Chromosome"/>
</dbReference>
<dbReference type="GO" id="GO:0030956">
    <property type="term" value="C:glutamyl-tRNA(Gln) amidotransferase complex"/>
    <property type="evidence" value="ECO:0007669"/>
    <property type="project" value="InterPro"/>
</dbReference>
<dbReference type="GO" id="GO:0005524">
    <property type="term" value="F:ATP binding"/>
    <property type="evidence" value="ECO:0007669"/>
    <property type="project" value="UniProtKB-KW"/>
</dbReference>
<dbReference type="GO" id="GO:0050567">
    <property type="term" value="F:glutaminyl-tRNA synthase (glutamine-hydrolyzing) activity"/>
    <property type="evidence" value="ECO:0007669"/>
    <property type="project" value="UniProtKB-UniRule"/>
</dbReference>
<dbReference type="GO" id="GO:0006412">
    <property type="term" value="P:translation"/>
    <property type="evidence" value="ECO:0007669"/>
    <property type="project" value="UniProtKB-UniRule"/>
</dbReference>
<dbReference type="Gene3D" id="3.90.1300.10">
    <property type="entry name" value="Amidase signature (AS) domain"/>
    <property type="match status" value="1"/>
</dbReference>
<dbReference type="HAMAP" id="MF_00120">
    <property type="entry name" value="GatA"/>
    <property type="match status" value="1"/>
</dbReference>
<dbReference type="InterPro" id="IPR000120">
    <property type="entry name" value="Amidase"/>
</dbReference>
<dbReference type="InterPro" id="IPR020556">
    <property type="entry name" value="Amidase_CS"/>
</dbReference>
<dbReference type="InterPro" id="IPR023631">
    <property type="entry name" value="Amidase_dom"/>
</dbReference>
<dbReference type="InterPro" id="IPR036928">
    <property type="entry name" value="AS_sf"/>
</dbReference>
<dbReference type="InterPro" id="IPR004412">
    <property type="entry name" value="GatA"/>
</dbReference>
<dbReference type="NCBIfam" id="TIGR00132">
    <property type="entry name" value="gatA"/>
    <property type="match status" value="1"/>
</dbReference>
<dbReference type="PANTHER" id="PTHR11895:SF151">
    <property type="entry name" value="GLUTAMYL-TRNA(GLN) AMIDOTRANSFERASE SUBUNIT A"/>
    <property type="match status" value="1"/>
</dbReference>
<dbReference type="PANTHER" id="PTHR11895">
    <property type="entry name" value="TRANSAMIDASE"/>
    <property type="match status" value="1"/>
</dbReference>
<dbReference type="Pfam" id="PF01425">
    <property type="entry name" value="Amidase"/>
    <property type="match status" value="1"/>
</dbReference>
<dbReference type="SUPFAM" id="SSF75304">
    <property type="entry name" value="Amidase signature (AS) enzymes"/>
    <property type="match status" value="1"/>
</dbReference>
<dbReference type="PROSITE" id="PS00571">
    <property type="entry name" value="AMIDASES"/>
    <property type="match status" value="1"/>
</dbReference>
<accession>Q9JYZ9</accession>
<reference key="1">
    <citation type="journal article" date="2000" name="Science">
        <title>Complete genome sequence of Neisseria meningitidis serogroup B strain MC58.</title>
        <authorList>
            <person name="Tettelin H."/>
            <person name="Saunders N.J."/>
            <person name="Heidelberg J.F."/>
            <person name="Jeffries A.C."/>
            <person name="Nelson K.E."/>
            <person name="Eisen J.A."/>
            <person name="Ketchum K.A."/>
            <person name="Hood D.W."/>
            <person name="Peden J.F."/>
            <person name="Dodson R.J."/>
            <person name="Nelson W.C."/>
            <person name="Gwinn M.L."/>
            <person name="DeBoy R.T."/>
            <person name="Peterson J.D."/>
            <person name="Hickey E.K."/>
            <person name="Haft D.H."/>
            <person name="Salzberg S.L."/>
            <person name="White O."/>
            <person name="Fleischmann R.D."/>
            <person name="Dougherty B.A."/>
            <person name="Mason T.M."/>
            <person name="Ciecko A."/>
            <person name="Parksey D.S."/>
            <person name="Blair E."/>
            <person name="Cittone H."/>
            <person name="Clark E.B."/>
            <person name="Cotton M.D."/>
            <person name="Utterback T.R."/>
            <person name="Khouri H.M."/>
            <person name="Qin H."/>
            <person name="Vamathevan J.J."/>
            <person name="Gill J."/>
            <person name="Scarlato V."/>
            <person name="Masignani V."/>
            <person name="Pizza M."/>
            <person name="Grandi G."/>
            <person name="Sun L."/>
            <person name="Smith H.O."/>
            <person name="Fraser C.M."/>
            <person name="Moxon E.R."/>
            <person name="Rappuoli R."/>
            <person name="Venter J.C."/>
        </authorList>
    </citation>
    <scope>NUCLEOTIDE SEQUENCE [LARGE SCALE GENOMIC DNA]</scope>
    <source>
        <strain>ATCC BAA-335 / MC58</strain>
    </source>
</reference>
<sequence>MTQYTLKQASVLLQSKQISAVELASAYLAAIAEKNPALNGYITIDQDKTLAEARAADERIAQGNASALTGVPVAYKDIFCQTGWRSACASKMLDNFISPYTATVVQNLLDEGMVTLGRTNMDEFAMGSTNENSFYGAAKNPWNLEHVPGGSSGGSAAVVAARLAPAALGSDTGGSIRQPASHCGITGIKPTYGTVSRFGMVAYASSFDQTGPMAQTAEDCAILLNAMAGFDPKDSTSLEREKEDYTRDLNQPLKGLKIGLPKEYFGEGNSADVLTALQNTIDLLKAQGAELIEVSLPQTKLSIPAYYVLASAEASTNLSRYDGVRYGHRAAQFADLEEMYGKTRAEGFGSEVKRRIMIGTYVLSHGYYDAYYLKAQKLRRLVADDFQTAFARCDLILAPTAPTAAPKIGADASPVETYLSDIYTIAVNLAGLPALTLPAGFSGGGLPVGVQLVGNYFAEAKILGAAHQIQLNSDWHGKRPE</sequence>
<gene>
    <name evidence="1" type="primary">gatA</name>
    <name type="ordered locus">NMB1356</name>
</gene>
<evidence type="ECO:0000255" key="1">
    <source>
        <dbReference type="HAMAP-Rule" id="MF_00120"/>
    </source>
</evidence>
<name>GATA_NEIMB</name>
<keyword id="KW-0067">ATP-binding</keyword>
<keyword id="KW-0436">Ligase</keyword>
<keyword id="KW-0547">Nucleotide-binding</keyword>
<keyword id="KW-0648">Protein biosynthesis</keyword>
<keyword id="KW-1185">Reference proteome</keyword>
<feature type="chain" id="PRO_0000105183" description="Glutamyl-tRNA(Gln) amidotransferase subunit A">
    <location>
        <begin position="1"/>
        <end position="481"/>
    </location>
</feature>
<feature type="active site" description="Charge relay system" evidence="1">
    <location>
        <position position="76"/>
    </location>
</feature>
<feature type="active site" description="Charge relay system" evidence="1">
    <location>
        <position position="151"/>
    </location>
</feature>
<feature type="active site" description="Acyl-ester intermediate" evidence="1">
    <location>
        <position position="175"/>
    </location>
</feature>